<sequence length="193" mass="20354">MIGRIAGVLLEKNPPHLLIDCNGVGYEVDVPMSTFYNLPGTGEKVVLLTQMIVREDAHLLYGFLTPQERSTFRELLKITGIGARMALAVLSGMSVQELSQTVTMQDAARLTRVPGIGKKTAERLLLELKGKLGADLGAMAGAASQSDHASDILNALLALGYSEKEGLAAIKNVPAGTGVSEGIKLALKALSKA</sequence>
<gene>
    <name evidence="1" type="primary">ruvA</name>
    <name type="ordered locus">Bphy_2556</name>
</gene>
<name>RUVA_PARP8</name>
<reference key="1">
    <citation type="journal article" date="2014" name="Stand. Genomic Sci.">
        <title>Complete genome sequence of Burkholderia phymatum STM815(T), a broad host range and efficient nitrogen-fixing symbiont of Mimosa species.</title>
        <authorList>
            <person name="Moulin L."/>
            <person name="Klonowska A."/>
            <person name="Caroline B."/>
            <person name="Booth K."/>
            <person name="Vriezen J.A."/>
            <person name="Melkonian R."/>
            <person name="James E.K."/>
            <person name="Young J.P."/>
            <person name="Bena G."/>
            <person name="Hauser L."/>
            <person name="Land M."/>
            <person name="Kyrpides N."/>
            <person name="Bruce D."/>
            <person name="Chain P."/>
            <person name="Copeland A."/>
            <person name="Pitluck S."/>
            <person name="Woyke T."/>
            <person name="Lizotte-Waniewski M."/>
            <person name="Bristow J."/>
            <person name="Riley M."/>
        </authorList>
    </citation>
    <scope>NUCLEOTIDE SEQUENCE [LARGE SCALE GENOMIC DNA]</scope>
    <source>
        <strain>DSM 17167 / CIP 108236 / LMG 21445 / STM815</strain>
    </source>
</reference>
<comment type="function">
    <text evidence="1">The RuvA-RuvB-RuvC complex processes Holliday junction (HJ) DNA during genetic recombination and DNA repair, while the RuvA-RuvB complex plays an important role in the rescue of blocked DNA replication forks via replication fork reversal (RFR). RuvA specifically binds to HJ cruciform DNA, conferring on it an open structure. The RuvB hexamer acts as an ATP-dependent pump, pulling dsDNA into and through the RuvAB complex. HJ branch migration allows RuvC to scan DNA until it finds its consensus sequence, where it cleaves and resolves the cruciform DNA.</text>
</comment>
<comment type="subunit">
    <text evidence="1">Homotetramer. Forms an RuvA(8)-RuvB(12)-Holliday junction (HJ) complex. HJ DNA is sandwiched between 2 RuvA tetramers; dsDNA enters through RuvA and exits via RuvB. An RuvB hexamer assembles on each DNA strand where it exits the tetramer. Each RuvB hexamer is contacted by two RuvA subunits (via domain III) on 2 adjacent RuvB subunits; this complex drives branch migration. In the full resolvosome a probable DNA-RuvA(4)-RuvB(12)-RuvC(2) complex forms which resolves the HJ.</text>
</comment>
<comment type="subcellular location">
    <subcellularLocation>
        <location evidence="1">Cytoplasm</location>
    </subcellularLocation>
</comment>
<comment type="domain">
    <text evidence="1">Has three domains with a flexible linker between the domains II and III and assumes an 'L' shape. Domain III is highly mobile and contacts RuvB.</text>
</comment>
<comment type="similarity">
    <text evidence="1">Belongs to the RuvA family.</text>
</comment>
<accession>B2JGU4</accession>
<organism>
    <name type="scientific">Paraburkholderia phymatum (strain DSM 17167 / CIP 108236 / LMG 21445 / STM815)</name>
    <name type="common">Burkholderia phymatum</name>
    <dbReference type="NCBI Taxonomy" id="391038"/>
    <lineage>
        <taxon>Bacteria</taxon>
        <taxon>Pseudomonadati</taxon>
        <taxon>Pseudomonadota</taxon>
        <taxon>Betaproteobacteria</taxon>
        <taxon>Burkholderiales</taxon>
        <taxon>Burkholderiaceae</taxon>
        <taxon>Paraburkholderia</taxon>
    </lineage>
</organism>
<feature type="chain" id="PRO_1000090293" description="Holliday junction branch migration complex subunit RuvA">
    <location>
        <begin position="1"/>
        <end position="193"/>
    </location>
</feature>
<feature type="region of interest" description="Domain I" evidence="1">
    <location>
        <begin position="1"/>
        <end position="64"/>
    </location>
</feature>
<feature type="region of interest" description="Domain II" evidence="1">
    <location>
        <begin position="65"/>
        <end position="139"/>
    </location>
</feature>
<feature type="region of interest" description="Flexible linker" evidence="1">
    <location>
        <begin position="139"/>
        <end position="143"/>
    </location>
</feature>
<feature type="region of interest" description="Domain III" evidence="1">
    <location>
        <begin position="144"/>
        <end position="193"/>
    </location>
</feature>
<evidence type="ECO:0000255" key="1">
    <source>
        <dbReference type="HAMAP-Rule" id="MF_00031"/>
    </source>
</evidence>
<dbReference type="EMBL" id="CP001043">
    <property type="protein sequence ID" value="ACC71728.1"/>
    <property type="molecule type" value="Genomic_DNA"/>
</dbReference>
<dbReference type="RefSeq" id="WP_012401931.1">
    <property type="nucleotide sequence ID" value="NZ_CADFGH010000002.1"/>
</dbReference>
<dbReference type="SMR" id="B2JGU4"/>
<dbReference type="STRING" id="391038.Bphy_2556"/>
<dbReference type="GeneID" id="69968316"/>
<dbReference type="KEGG" id="bph:Bphy_2556"/>
<dbReference type="eggNOG" id="COG0632">
    <property type="taxonomic scope" value="Bacteria"/>
</dbReference>
<dbReference type="HOGENOM" id="CLU_087936_0_0_4"/>
<dbReference type="OrthoDB" id="5293449at2"/>
<dbReference type="Proteomes" id="UP000001192">
    <property type="component" value="Chromosome 1"/>
</dbReference>
<dbReference type="GO" id="GO:0005737">
    <property type="term" value="C:cytoplasm"/>
    <property type="evidence" value="ECO:0007669"/>
    <property type="project" value="UniProtKB-SubCell"/>
</dbReference>
<dbReference type="GO" id="GO:0009379">
    <property type="term" value="C:Holliday junction helicase complex"/>
    <property type="evidence" value="ECO:0007669"/>
    <property type="project" value="InterPro"/>
</dbReference>
<dbReference type="GO" id="GO:0048476">
    <property type="term" value="C:Holliday junction resolvase complex"/>
    <property type="evidence" value="ECO:0007669"/>
    <property type="project" value="UniProtKB-UniRule"/>
</dbReference>
<dbReference type="GO" id="GO:0005524">
    <property type="term" value="F:ATP binding"/>
    <property type="evidence" value="ECO:0007669"/>
    <property type="project" value="InterPro"/>
</dbReference>
<dbReference type="GO" id="GO:0000400">
    <property type="term" value="F:four-way junction DNA binding"/>
    <property type="evidence" value="ECO:0007669"/>
    <property type="project" value="UniProtKB-UniRule"/>
</dbReference>
<dbReference type="GO" id="GO:0009378">
    <property type="term" value="F:four-way junction helicase activity"/>
    <property type="evidence" value="ECO:0007669"/>
    <property type="project" value="InterPro"/>
</dbReference>
<dbReference type="GO" id="GO:0006310">
    <property type="term" value="P:DNA recombination"/>
    <property type="evidence" value="ECO:0007669"/>
    <property type="project" value="UniProtKB-UniRule"/>
</dbReference>
<dbReference type="GO" id="GO:0006281">
    <property type="term" value="P:DNA repair"/>
    <property type="evidence" value="ECO:0007669"/>
    <property type="project" value="UniProtKB-UniRule"/>
</dbReference>
<dbReference type="CDD" id="cd14332">
    <property type="entry name" value="UBA_RuvA_C"/>
    <property type="match status" value="1"/>
</dbReference>
<dbReference type="Gene3D" id="1.10.150.20">
    <property type="entry name" value="5' to 3' exonuclease, C-terminal subdomain"/>
    <property type="match status" value="1"/>
</dbReference>
<dbReference type="Gene3D" id="1.10.8.10">
    <property type="entry name" value="DNA helicase RuvA subunit, C-terminal domain"/>
    <property type="match status" value="1"/>
</dbReference>
<dbReference type="Gene3D" id="2.40.50.140">
    <property type="entry name" value="Nucleic acid-binding proteins"/>
    <property type="match status" value="1"/>
</dbReference>
<dbReference type="HAMAP" id="MF_00031">
    <property type="entry name" value="DNA_HJ_migration_RuvA"/>
    <property type="match status" value="1"/>
</dbReference>
<dbReference type="InterPro" id="IPR013849">
    <property type="entry name" value="DNA_helicase_Holl-junc_RuvA_I"/>
</dbReference>
<dbReference type="InterPro" id="IPR003583">
    <property type="entry name" value="Hlx-hairpin-Hlx_DNA-bd_motif"/>
</dbReference>
<dbReference type="InterPro" id="IPR012340">
    <property type="entry name" value="NA-bd_OB-fold"/>
</dbReference>
<dbReference type="InterPro" id="IPR000085">
    <property type="entry name" value="RuvA"/>
</dbReference>
<dbReference type="InterPro" id="IPR010994">
    <property type="entry name" value="RuvA_2-like"/>
</dbReference>
<dbReference type="InterPro" id="IPR011114">
    <property type="entry name" value="RuvA_C"/>
</dbReference>
<dbReference type="InterPro" id="IPR036267">
    <property type="entry name" value="RuvA_C_sf"/>
</dbReference>
<dbReference type="NCBIfam" id="TIGR00084">
    <property type="entry name" value="ruvA"/>
    <property type="match status" value="1"/>
</dbReference>
<dbReference type="Pfam" id="PF14520">
    <property type="entry name" value="HHH_5"/>
    <property type="match status" value="1"/>
</dbReference>
<dbReference type="Pfam" id="PF07499">
    <property type="entry name" value="RuvA_C"/>
    <property type="match status" value="1"/>
</dbReference>
<dbReference type="Pfam" id="PF01330">
    <property type="entry name" value="RuvA_N"/>
    <property type="match status" value="1"/>
</dbReference>
<dbReference type="SMART" id="SM00278">
    <property type="entry name" value="HhH1"/>
    <property type="match status" value="2"/>
</dbReference>
<dbReference type="SUPFAM" id="SSF46929">
    <property type="entry name" value="DNA helicase RuvA subunit, C-terminal domain"/>
    <property type="match status" value="1"/>
</dbReference>
<dbReference type="SUPFAM" id="SSF50249">
    <property type="entry name" value="Nucleic acid-binding proteins"/>
    <property type="match status" value="1"/>
</dbReference>
<dbReference type="SUPFAM" id="SSF47781">
    <property type="entry name" value="RuvA domain 2-like"/>
    <property type="match status" value="1"/>
</dbReference>
<keyword id="KW-0963">Cytoplasm</keyword>
<keyword id="KW-0227">DNA damage</keyword>
<keyword id="KW-0233">DNA recombination</keyword>
<keyword id="KW-0234">DNA repair</keyword>
<keyword id="KW-0238">DNA-binding</keyword>
<keyword id="KW-1185">Reference proteome</keyword>
<protein>
    <recommendedName>
        <fullName evidence="1">Holliday junction branch migration complex subunit RuvA</fullName>
    </recommendedName>
</protein>
<proteinExistence type="inferred from homology"/>